<accession>Q9P7J0</accession>
<proteinExistence type="predicted"/>
<feature type="chain" id="PRO_0000116817" description="Uncharacterized protein C24B10.16c">
    <location>
        <begin position="1"/>
        <end position="124"/>
    </location>
</feature>
<name>YJNG_SCHPO</name>
<protein>
    <recommendedName>
        <fullName>Uncharacterized protein C24B10.16c</fullName>
    </recommendedName>
</protein>
<gene>
    <name type="ORF">SPCC24B10.16c</name>
</gene>
<dbReference type="EMBL" id="CU329672">
    <property type="protein sequence ID" value="CAB76225.2"/>
    <property type="molecule type" value="Genomic_DNA"/>
</dbReference>
<dbReference type="PIR" id="T50423">
    <property type="entry name" value="T50423"/>
</dbReference>
<dbReference type="SMR" id="Q9P7J0"/>
<dbReference type="BioGRID" id="275931">
    <property type="interactions" value="18"/>
</dbReference>
<dbReference type="PaxDb" id="4896-SPCC24B10.16c.1"/>
<dbReference type="EnsemblFungi" id="SPCC24B10.16c.1">
    <property type="protein sequence ID" value="SPCC24B10.16c.1:pep"/>
    <property type="gene ID" value="SPCC24B10.16c"/>
</dbReference>
<dbReference type="KEGG" id="spo:2539365"/>
<dbReference type="PomBase" id="SPCC24B10.16c"/>
<dbReference type="VEuPathDB" id="FungiDB:SPCC24B10.16c"/>
<dbReference type="HOGENOM" id="CLU_149529_0_0_1"/>
<dbReference type="InParanoid" id="Q9P7J0"/>
<dbReference type="OMA" id="YVWASNS"/>
<dbReference type="Reactome" id="R-SPO-9907900">
    <property type="pathway name" value="Proteasome assembly"/>
</dbReference>
<dbReference type="PRO" id="PR:Q9P7J0"/>
<dbReference type="Proteomes" id="UP000002485">
    <property type="component" value="Chromosome III"/>
</dbReference>
<dbReference type="GO" id="GO:0005829">
    <property type="term" value="C:cytosol"/>
    <property type="evidence" value="ECO:0007005"/>
    <property type="project" value="PomBase"/>
</dbReference>
<dbReference type="GO" id="GO:0005634">
    <property type="term" value="C:nucleus"/>
    <property type="evidence" value="ECO:0007005"/>
    <property type="project" value="PomBase"/>
</dbReference>
<dbReference type="GO" id="GO:0044183">
    <property type="term" value="F:protein folding chaperone"/>
    <property type="evidence" value="ECO:0000303"/>
    <property type="project" value="PomBase"/>
</dbReference>
<dbReference type="GO" id="GO:0043248">
    <property type="term" value="P:proteasome assembly"/>
    <property type="evidence" value="ECO:0000316"/>
    <property type="project" value="PomBase"/>
</dbReference>
<dbReference type="Gene3D" id="3.30.230.100">
    <property type="match status" value="1"/>
</dbReference>
<dbReference type="InterPro" id="IPR032157">
    <property type="entry name" value="PAC4"/>
</dbReference>
<dbReference type="PANTHER" id="PTHR33559">
    <property type="entry name" value="PROTEASOME ASSEMBLY CHAPERONE 4"/>
    <property type="match status" value="1"/>
</dbReference>
<dbReference type="PANTHER" id="PTHR33559:SF1">
    <property type="entry name" value="PROTEASOME ASSEMBLY CHAPERONE 4"/>
    <property type="match status" value="1"/>
</dbReference>
<dbReference type="Pfam" id="PF16093">
    <property type="entry name" value="PAC4"/>
    <property type="match status" value="1"/>
</dbReference>
<evidence type="ECO:0000269" key="1">
    <source>
    </source>
</evidence>
<organism>
    <name type="scientific">Schizosaccharomyces pombe (strain 972 / ATCC 24843)</name>
    <name type="common">Fission yeast</name>
    <dbReference type="NCBI Taxonomy" id="284812"/>
    <lineage>
        <taxon>Eukaryota</taxon>
        <taxon>Fungi</taxon>
        <taxon>Dikarya</taxon>
        <taxon>Ascomycota</taxon>
        <taxon>Taphrinomycotina</taxon>
        <taxon>Schizosaccharomycetes</taxon>
        <taxon>Schizosaccharomycetales</taxon>
        <taxon>Schizosaccharomycetaceae</taxon>
        <taxon>Schizosaccharomyces</taxon>
    </lineage>
</organism>
<sequence>MFQVIQKELDFGNAMIPKVWIQVIKLNPSSSIFVWGSNVSTCPAGDLALSMPGKSDVVTTKLTGAGSIDDLSTQMSRILSKKFQAQVYTSINLQGDFPNDPEVQSVFTQVIRAVIEIIESSKSS</sequence>
<keyword id="KW-0963">Cytoplasm</keyword>
<keyword id="KW-0539">Nucleus</keyword>
<keyword id="KW-1185">Reference proteome</keyword>
<reference key="1">
    <citation type="journal article" date="2002" name="Nature">
        <title>The genome sequence of Schizosaccharomyces pombe.</title>
        <authorList>
            <person name="Wood V."/>
            <person name="Gwilliam R."/>
            <person name="Rajandream M.A."/>
            <person name="Lyne M.H."/>
            <person name="Lyne R."/>
            <person name="Stewart A."/>
            <person name="Sgouros J.G."/>
            <person name="Peat N."/>
            <person name="Hayles J."/>
            <person name="Baker S.G."/>
            <person name="Basham D."/>
            <person name="Bowman S."/>
            <person name="Brooks K."/>
            <person name="Brown D."/>
            <person name="Brown S."/>
            <person name="Chillingworth T."/>
            <person name="Churcher C.M."/>
            <person name="Collins M."/>
            <person name="Connor R."/>
            <person name="Cronin A."/>
            <person name="Davis P."/>
            <person name="Feltwell T."/>
            <person name="Fraser A."/>
            <person name="Gentles S."/>
            <person name="Goble A."/>
            <person name="Hamlin N."/>
            <person name="Harris D.E."/>
            <person name="Hidalgo J."/>
            <person name="Hodgson G."/>
            <person name="Holroyd S."/>
            <person name="Hornsby T."/>
            <person name="Howarth S."/>
            <person name="Huckle E.J."/>
            <person name="Hunt S."/>
            <person name="Jagels K."/>
            <person name="James K.D."/>
            <person name="Jones L."/>
            <person name="Jones M."/>
            <person name="Leather S."/>
            <person name="McDonald S."/>
            <person name="McLean J."/>
            <person name="Mooney P."/>
            <person name="Moule S."/>
            <person name="Mungall K.L."/>
            <person name="Murphy L.D."/>
            <person name="Niblett D."/>
            <person name="Odell C."/>
            <person name="Oliver K."/>
            <person name="O'Neil S."/>
            <person name="Pearson D."/>
            <person name="Quail M.A."/>
            <person name="Rabbinowitsch E."/>
            <person name="Rutherford K.M."/>
            <person name="Rutter S."/>
            <person name="Saunders D."/>
            <person name="Seeger K."/>
            <person name="Sharp S."/>
            <person name="Skelton J."/>
            <person name="Simmonds M.N."/>
            <person name="Squares R."/>
            <person name="Squares S."/>
            <person name="Stevens K."/>
            <person name="Taylor K."/>
            <person name="Taylor R.G."/>
            <person name="Tivey A."/>
            <person name="Walsh S.V."/>
            <person name="Warren T."/>
            <person name="Whitehead S."/>
            <person name="Woodward J.R."/>
            <person name="Volckaert G."/>
            <person name="Aert R."/>
            <person name="Robben J."/>
            <person name="Grymonprez B."/>
            <person name="Weltjens I."/>
            <person name="Vanstreels E."/>
            <person name="Rieger M."/>
            <person name="Schaefer M."/>
            <person name="Mueller-Auer S."/>
            <person name="Gabel C."/>
            <person name="Fuchs M."/>
            <person name="Duesterhoeft A."/>
            <person name="Fritzc C."/>
            <person name="Holzer E."/>
            <person name="Moestl D."/>
            <person name="Hilbert H."/>
            <person name="Borzym K."/>
            <person name="Langer I."/>
            <person name="Beck A."/>
            <person name="Lehrach H."/>
            <person name="Reinhardt R."/>
            <person name="Pohl T.M."/>
            <person name="Eger P."/>
            <person name="Zimmermann W."/>
            <person name="Wedler H."/>
            <person name="Wambutt R."/>
            <person name="Purnelle B."/>
            <person name="Goffeau A."/>
            <person name="Cadieu E."/>
            <person name="Dreano S."/>
            <person name="Gloux S."/>
            <person name="Lelaure V."/>
            <person name="Mottier S."/>
            <person name="Galibert F."/>
            <person name="Aves S.J."/>
            <person name="Xiang Z."/>
            <person name="Hunt C."/>
            <person name="Moore K."/>
            <person name="Hurst S.M."/>
            <person name="Lucas M."/>
            <person name="Rochet M."/>
            <person name="Gaillardin C."/>
            <person name="Tallada V.A."/>
            <person name="Garzon A."/>
            <person name="Thode G."/>
            <person name="Daga R.R."/>
            <person name="Cruzado L."/>
            <person name="Jimenez J."/>
            <person name="Sanchez M."/>
            <person name="del Rey F."/>
            <person name="Benito J."/>
            <person name="Dominguez A."/>
            <person name="Revuelta J.L."/>
            <person name="Moreno S."/>
            <person name="Armstrong J."/>
            <person name="Forsburg S.L."/>
            <person name="Cerutti L."/>
            <person name="Lowe T."/>
            <person name="McCombie W.R."/>
            <person name="Paulsen I."/>
            <person name="Potashkin J."/>
            <person name="Shpakovski G.V."/>
            <person name="Ussery D."/>
            <person name="Barrell B.G."/>
            <person name="Nurse P."/>
        </authorList>
    </citation>
    <scope>NUCLEOTIDE SEQUENCE [LARGE SCALE GENOMIC DNA]</scope>
    <source>
        <strain>972 / ATCC 24843</strain>
    </source>
</reference>
<reference key="2">
    <citation type="journal article" date="2011" name="Science">
        <title>Comparative functional genomics of the fission yeasts.</title>
        <authorList>
            <person name="Rhind N."/>
            <person name="Chen Z."/>
            <person name="Yassour M."/>
            <person name="Thompson D.A."/>
            <person name="Haas B.J."/>
            <person name="Habib N."/>
            <person name="Wapinski I."/>
            <person name="Roy S."/>
            <person name="Lin M.F."/>
            <person name="Heiman D.I."/>
            <person name="Young S.K."/>
            <person name="Furuya K."/>
            <person name="Guo Y."/>
            <person name="Pidoux A."/>
            <person name="Chen H.M."/>
            <person name="Robbertse B."/>
            <person name="Goldberg J.M."/>
            <person name="Aoki K."/>
            <person name="Bayne E.H."/>
            <person name="Berlin A.M."/>
            <person name="Desjardins C.A."/>
            <person name="Dobbs E."/>
            <person name="Dukaj L."/>
            <person name="Fan L."/>
            <person name="FitzGerald M.G."/>
            <person name="French C."/>
            <person name="Gujja S."/>
            <person name="Hansen K."/>
            <person name="Keifenheim D."/>
            <person name="Levin J.Z."/>
            <person name="Mosher R.A."/>
            <person name="Mueller C.A."/>
            <person name="Pfiffner J."/>
            <person name="Priest M."/>
            <person name="Russ C."/>
            <person name="Smialowska A."/>
            <person name="Swoboda P."/>
            <person name="Sykes S.M."/>
            <person name="Vaughn M."/>
            <person name="Vengrova S."/>
            <person name="Yoder R."/>
            <person name="Zeng Q."/>
            <person name="Allshire R."/>
            <person name="Baulcombe D."/>
            <person name="Birren B.W."/>
            <person name="Brown W."/>
            <person name="Ekwall K."/>
            <person name="Kellis M."/>
            <person name="Leatherwood J."/>
            <person name="Levin H."/>
            <person name="Margalit H."/>
            <person name="Martienssen R."/>
            <person name="Nieduszynski C.A."/>
            <person name="Spatafora J.W."/>
            <person name="Friedman N."/>
            <person name="Dalgaard J.Z."/>
            <person name="Baumann P."/>
            <person name="Niki H."/>
            <person name="Regev A."/>
            <person name="Nusbaum C."/>
        </authorList>
    </citation>
    <scope>REVISION OF GENE MODEL</scope>
</reference>
<reference key="3">
    <citation type="journal article" date="2006" name="Nat. Biotechnol.">
        <title>ORFeome cloning and global analysis of protein localization in the fission yeast Schizosaccharomyces pombe.</title>
        <authorList>
            <person name="Matsuyama A."/>
            <person name="Arai R."/>
            <person name="Yashiroda Y."/>
            <person name="Shirai A."/>
            <person name="Kamata A."/>
            <person name="Sekido S."/>
            <person name="Kobayashi Y."/>
            <person name="Hashimoto A."/>
            <person name="Hamamoto M."/>
            <person name="Hiraoka Y."/>
            <person name="Horinouchi S."/>
            <person name="Yoshida M."/>
        </authorList>
    </citation>
    <scope>SUBCELLULAR LOCATION [LARGE SCALE ANALYSIS]</scope>
</reference>
<comment type="subcellular location">
    <subcellularLocation>
        <location evidence="1">Cytoplasm</location>
    </subcellularLocation>
    <subcellularLocation>
        <location evidence="1">Nucleus</location>
    </subcellularLocation>
</comment>